<accession>P64539</accession>
<accession>P76439</accession>
<keyword id="KW-0472">Membrane</keyword>
<keyword id="KW-1185">Reference proteome</keyword>
<keyword id="KW-0812">Transmembrane</keyword>
<keyword id="KW-1133">Transmembrane helix</keyword>
<feature type="chain" id="PRO_0000169155" description="Uncharacterized protein YeiS">
    <location>
        <begin position="1"/>
        <end position="79"/>
    </location>
</feature>
<feature type="transmembrane region" description="Helical" evidence="1">
    <location>
        <begin position="53"/>
        <end position="73"/>
    </location>
</feature>
<sequence length="79" mass="9264">MDVQQFFVVAVFFLIPIFCFREAWKGWRAGAIDKRVKNAPEPVYVWRAKNPGLFFAYMVAYIGFGILSIGMIVYLIFYR</sequence>
<name>YEIS_SHIFL</name>
<proteinExistence type="predicted"/>
<comment type="subcellular location">
    <subcellularLocation>
        <location evidence="2">Membrane</location>
        <topology evidence="2">Single-pass membrane protein</topology>
    </subcellularLocation>
</comment>
<protein>
    <recommendedName>
        <fullName>Uncharacterized protein YeiS</fullName>
    </recommendedName>
</protein>
<gene>
    <name type="primary">yeiS</name>
    <name type="ordered locus">SF2230</name>
    <name type="ordered locus">S2359</name>
</gene>
<dbReference type="EMBL" id="AE005674">
    <property type="protein sequence ID" value="AAN43752.1"/>
    <property type="molecule type" value="Genomic_DNA"/>
</dbReference>
<dbReference type="EMBL" id="AE014073">
    <property type="protein sequence ID" value="AAP17569.1"/>
    <property type="molecule type" value="Genomic_DNA"/>
</dbReference>
<dbReference type="RefSeq" id="NP_708045.1">
    <property type="nucleotide sequence ID" value="NC_004337.2"/>
</dbReference>
<dbReference type="RefSeq" id="WP_000383096.1">
    <property type="nucleotide sequence ID" value="NZ_WPGW01000017.1"/>
</dbReference>
<dbReference type="SMR" id="P64539"/>
<dbReference type="STRING" id="198214.SF2230"/>
<dbReference type="PaxDb" id="198214-SF2230"/>
<dbReference type="GeneID" id="1025372"/>
<dbReference type="KEGG" id="sfl:SF2230"/>
<dbReference type="KEGG" id="sfx:S2359"/>
<dbReference type="PATRIC" id="fig|198214.7.peg.2671"/>
<dbReference type="HOGENOM" id="CLU_196596_0_0_6"/>
<dbReference type="Proteomes" id="UP000001006">
    <property type="component" value="Chromosome"/>
</dbReference>
<dbReference type="Proteomes" id="UP000002673">
    <property type="component" value="Chromosome"/>
</dbReference>
<dbReference type="GO" id="GO:0016020">
    <property type="term" value="C:membrane"/>
    <property type="evidence" value="ECO:0007669"/>
    <property type="project" value="UniProtKB-SubCell"/>
</dbReference>
<dbReference type="InterPro" id="IPR020155">
    <property type="entry name" value="Uncharacterised_YeiS"/>
</dbReference>
<dbReference type="Pfam" id="PF10808">
    <property type="entry name" value="DUF2542"/>
    <property type="match status" value="1"/>
</dbReference>
<organism>
    <name type="scientific">Shigella flexneri</name>
    <dbReference type="NCBI Taxonomy" id="623"/>
    <lineage>
        <taxon>Bacteria</taxon>
        <taxon>Pseudomonadati</taxon>
        <taxon>Pseudomonadota</taxon>
        <taxon>Gammaproteobacteria</taxon>
        <taxon>Enterobacterales</taxon>
        <taxon>Enterobacteriaceae</taxon>
        <taxon>Shigella</taxon>
    </lineage>
</organism>
<evidence type="ECO:0000255" key="1"/>
<evidence type="ECO:0000305" key="2"/>
<reference key="1">
    <citation type="journal article" date="2002" name="Nucleic Acids Res.">
        <title>Genome sequence of Shigella flexneri 2a: insights into pathogenicity through comparison with genomes of Escherichia coli K12 and O157.</title>
        <authorList>
            <person name="Jin Q."/>
            <person name="Yuan Z."/>
            <person name="Xu J."/>
            <person name="Wang Y."/>
            <person name="Shen Y."/>
            <person name="Lu W."/>
            <person name="Wang J."/>
            <person name="Liu H."/>
            <person name="Yang J."/>
            <person name="Yang F."/>
            <person name="Zhang X."/>
            <person name="Zhang J."/>
            <person name="Yang G."/>
            <person name="Wu H."/>
            <person name="Qu D."/>
            <person name="Dong J."/>
            <person name="Sun L."/>
            <person name="Xue Y."/>
            <person name="Zhao A."/>
            <person name="Gao Y."/>
            <person name="Zhu J."/>
            <person name="Kan B."/>
            <person name="Ding K."/>
            <person name="Chen S."/>
            <person name="Cheng H."/>
            <person name="Yao Z."/>
            <person name="He B."/>
            <person name="Chen R."/>
            <person name="Ma D."/>
            <person name="Qiang B."/>
            <person name="Wen Y."/>
            <person name="Hou Y."/>
            <person name="Yu J."/>
        </authorList>
    </citation>
    <scope>NUCLEOTIDE SEQUENCE [LARGE SCALE GENOMIC DNA]</scope>
    <source>
        <strain>301 / Serotype 2a</strain>
    </source>
</reference>
<reference key="2">
    <citation type="journal article" date="2003" name="Infect. Immun.">
        <title>Complete genome sequence and comparative genomics of Shigella flexneri serotype 2a strain 2457T.</title>
        <authorList>
            <person name="Wei J."/>
            <person name="Goldberg M.B."/>
            <person name="Burland V."/>
            <person name="Venkatesan M.M."/>
            <person name="Deng W."/>
            <person name="Fournier G."/>
            <person name="Mayhew G.F."/>
            <person name="Plunkett G. III"/>
            <person name="Rose D.J."/>
            <person name="Darling A."/>
            <person name="Mau B."/>
            <person name="Perna N.T."/>
            <person name="Payne S.M."/>
            <person name="Runyen-Janecky L.J."/>
            <person name="Zhou S."/>
            <person name="Schwartz D.C."/>
            <person name="Blattner F.R."/>
        </authorList>
    </citation>
    <scope>NUCLEOTIDE SEQUENCE [LARGE SCALE GENOMIC DNA]</scope>
    <source>
        <strain>ATCC 700930 / 2457T / Serotype 2a</strain>
    </source>
</reference>